<sequence length="222" mass="24809">MVSYHICEYQDSDYKSVVDVFTKGAEEYIPSTFRHLLLLPRTLLLLLGVSLALVLVSGSWLLAVVCIFFLLPFLWFLAGQPWKNYVSKCLHTDMADITKSYLSDRGSGFWVAESGEQVVGTVGALPVKEPPSGRKQLQLFHLAVSSQHRGQGIAKALVRTVLQFARDQGYTDVVLETSTMQIGAVTLYLGMGFQKTGQYFPSMLWRLVGIRFVQLNYSFPSA</sequence>
<proteinExistence type="evidence at transcript level"/>
<keyword id="KW-0007">Acetylation</keyword>
<keyword id="KW-0012">Acyltransferase</keyword>
<keyword id="KW-0256">Endoplasmic reticulum</keyword>
<keyword id="KW-0472">Membrane</keyword>
<keyword id="KW-1185">Reference proteome</keyword>
<keyword id="KW-0735">Signal-anchor</keyword>
<keyword id="KW-0808">Transferase</keyword>
<keyword id="KW-0812">Transmembrane</keyword>
<keyword id="KW-1133">Transmembrane helix</keyword>
<comment type="function">
    <text evidence="1 2">Endoplasmic reticulum (ER)-membrane-bound lysine N-acetyltransferase catalyzing the N6-acetylation of lysine residues in the lumen of the ER in various proteins, including PROM1 and BACE1, using acetyl-CoA as acetyl donor. Thereby, may regulate apoptosis through the acetylation and the regulation of the expression of PROM1. Acetylates and stabilizes BACE1 immature protein, leading to increased steady-state levels in neurons. By acting on BACE1 expression, may regulate amyloid beta-peptide formation (By similarity). N(6)-lysine acetylation in ER maintains protein homeostasis and regulates reticulophagy (By similarity).</text>
</comment>
<comment type="catalytic activity">
    <reaction evidence="2">
        <text>L-lysyl-[protein] + acetyl-CoA = N(6)-acetyl-L-lysyl-[protein] + CoA + H(+)</text>
        <dbReference type="Rhea" id="RHEA:45948"/>
        <dbReference type="Rhea" id="RHEA-COMP:9752"/>
        <dbReference type="Rhea" id="RHEA-COMP:10731"/>
        <dbReference type="ChEBI" id="CHEBI:15378"/>
        <dbReference type="ChEBI" id="CHEBI:29969"/>
        <dbReference type="ChEBI" id="CHEBI:57287"/>
        <dbReference type="ChEBI" id="CHEBI:57288"/>
        <dbReference type="ChEBI" id="CHEBI:61930"/>
    </reaction>
    <physiologicalReaction direction="left-to-right" evidence="2">
        <dbReference type="Rhea" id="RHEA:45949"/>
    </physiologicalReaction>
</comment>
<comment type="subcellular location">
    <subcellularLocation>
        <location evidence="2">Endoplasmic reticulum-Golgi intermediate compartment membrane</location>
        <topology evidence="2">Single-pass type II membrane protein</topology>
    </subcellularLocation>
    <subcellularLocation>
        <location evidence="2">Endoplasmic reticulum membrane</location>
        <topology evidence="2">Single-pass type II membrane protein</topology>
    </subcellularLocation>
    <text evidence="2">Enriched in the endoplasmic reticulum-Golgi intermediate compartment.</text>
</comment>
<comment type="PTM">
    <text evidence="2">Acetylation on Lys-99 modulates enzymatic activity.</text>
</comment>
<comment type="similarity">
    <text evidence="5">Belongs to the NAT8 family.</text>
</comment>
<evidence type="ECO:0000250" key="1">
    <source>
        <dbReference type="UniProtKB" id="E0CYC6"/>
    </source>
</evidence>
<evidence type="ECO:0000250" key="2">
    <source>
        <dbReference type="UniProtKB" id="Q9UHF3"/>
    </source>
</evidence>
<evidence type="ECO:0000255" key="3"/>
<evidence type="ECO:0000255" key="4">
    <source>
        <dbReference type="PROSITE-ProRule" id="PRU00532"/>
    </source>
</evidence>
<evidence type="ECO:0000305" key="5"/>
<evidence type="ECO:0000312" key="6">
    <source>
        <dbReference type="EMBL" id="AAF80487.1"/>
    </source>
</evidence>
<evidence type="ECO:0000312" key="7">
    <source>
        <dbReference type="EMBL" id="AAH81733.1"/>
    </source>
</evidence>
<evidence type="ECO:0000312" key="8">
    <source>
        <dbReference type="RGD" id="621605"/>
    </source>
</evidence>
<organism>
    <name type="scientific">Rattus norvegicus</name>
    <name type="common">Rat</name>
    <dbReference type="NCBI Taxonomy" id="10116"/>
    <lineage>
        <taxon>Eukaryota</taxon>
        <taxon>Metazoa</taxon>
        <taxon>Chordata</taxon>
        <taxon>Craniata</taxon>
        <taxon>Vertebrata</taxon>
        <taxon>Euteleostomi</taxon>
        <taxon>Mammalia</taxon>
        <taxon>Eutheria</taxon>
        <taxon>Euarchontoglires</taxon>
        <taxon>Glires</taxon>
        <taxon>Rodentia</taxon>
        <taxon>Myomorpha</taxon>
        <taxon>Muroidea</taxon>
        <taxon>Muridae</taxon>
        <taxon>Murinae</taxon>
        <taxon>Rattus</taxon>
    </lineage>
</organism>
<accession>Q9JIY6</accession>
<name>NAT8B_RAT</name>
<dbReference type="EC" id="2.3.1.-" evidence="2"/>
<dbReference type="EMBL" id="AF163318">
    <property type="protein sequence ID" value="AAF80487.1"/>
    <property type="molecule type" value="mRNA"/>
</dbReference>
<dbReference type="EMBL" id="BC081733">
    <property type="protein sequence ID" value="AAH81733.1"/>
    <property type="molecule type" value="mRNA"/>
</dbReference>
<dbReference type="RefSeq" id="NP_598242.1">
    <property type="nucleotide sequence ID" value="NM_133558.2"/>
</dbReference>
<dbReference type="RefSeq" id="XP_008761325.1">
    <property type="nucleotide sequence ID" value="XM_008763103.2"/>
</dbReference>
<dbReference type="RefSeq" id="XP_008761326.1">
    <property type="nucleotide sequence ID" value="XM_008763104.1"/>
</dbReference>
<dbReference type="RefSeq" id="XP_008761327.1">
    <property type="nucleotide sequence ID" value="XM_008763105.4"/>
</dbReference>
<dbReference type="RefSeq" id="XP_008761328.1">
    <property type="nucleotide sequence ID" value="XM_008763106.2"/>
</dbReference>
<dbReference type="RefSeq" id="XP_008761329.1">
    <property type="nucleotide sequence ID" value="XM_008763107.4"/>
</dbReference>
<dbReference type="RefSeq" id="XP_017448499.1">
    <property type="nucleotide sequence ID" value="XM_017593010.3"/>
</dbReference>
<dbReference type="RefSeq" id="XP_038962908.1">
    <property type="nucleotide sequence ID" value="XM_039106980.2"/>
</dbReference>
<dbReference type="FunCoup" id="Q9JIY6">
    <property type="interactions" value="23"/>
</dbReference>
<dbReference type="STRING" id="10116.ENSRNOP00000021243"/>
<dbReference type="PhosphoSitePlus" id="Q9JIY6"/>
<dbReference type="PaxDb" id="10116-ENSRNOP00000021243"/>
<dbReference type="Ensembl" id="ENSRNOT00000088557.2">
    <property type="protein sequence ID" value="ENSRNOP00000068791.1"/>
    <property type="gene ID" value="ENSRNOG00000056962.2"/>
</dbReference>
<dbReference type="Ensembl" id="ENSRNOT00000096643.1">
    <property type="protein sequence ID" value="ENSRNOP00000078918.1"/>
    <property type="gene ID" value="ENSRNOG00000056962.2"/>
</dbReference>
<dbReference type="Ensembl" id="ENSRNOT00000116398.1">
    <property type="protein sequence ID" value="ENSRNOP00000077199.1"/>
    <property type="gene ID" value="ENSRNOG00000056962.2"/>
</dbReference>
<dbReference type="GeneID" id="171084"/>
<dbReference type="KEGG" id="rno:171084"/>
<dbReference type="UCSC" id="RGD:621605">
    <property type="organism name" value="rat"/>
</dbReference>
<dbReference type="AGR" id="RGD:621605"/>
<dbReference type="CTD" id="51471"/>
<dbReference type="RGD" id="621605">
    <property type="gene designation" value="Nat8b"/>
</dbReference>
<dbReference type="VEuPathDB" id="HostDB:ENSRNOG00000063398"/>
<dbReference type="eggNOG" id="KOG3139">
    <property type="taxonomic scope" value="Eukaryota"/>
</dbReference>
<dbReference type="GeneTree" id="ENSGT00950000182932"/>
<dbReference type="HOGENOM" id="CLU_013985_10_1_1"/>
<dbReference type="InParanoid" id="Q9JIY6"/>
<dbReference type="OMA" id="YVPTLCV"/>
<dbReference type="OrthoDB" id="41532at2759"/>
<dbReference type="PhylomeDB" id="Q9JIY6"/>
<dbReference type="TreeFam" id="TF324687"/>
<dbReference type="PRO" id="PR:Q9JIY6"/>
<dbReference type="Proteomes" id="UP000002494">
    <property type="component" value="Chromosome 4"/>
</dbReference>
<dbReference type="Bgee" id="ENSRNOG00000015851">
    <property type="expression patterns" value="Expressed in kidney and 19 other cell types or tissues"/>
</dbReference>
<dbReference type="GO" id="GO:0005789">
    <property type="term" value="C:endoplasmic reticulum membrane"/>
    <property type="evidence" value="ECO:0000266"/>
    <property type="project" value="RGD"/>
</dbReference>
<dbReference type="GO" id="GO:0005793">
    <property type="term" value="C:endoplasmic reticulum-Golgi intermediate compartment"/>
    <property type="evidence" value="ECO:0000266"/>
    <property type="project" value="RGD"/>
</dbReference>
<dbReference type="GO" id="GO:0033116">
    <property type="term" value="C:endoplasmic reticulum-Golgi intermediate compartment membrane"/>
    <property type="evidence" value="ECO:0000266"/>
    <property type="project" value="RGD"/>
</dbReference>
<dbReference type="GO" id="GO:0016020">
    <property type="term" value="C:membrane"/>
    <property type="evidence" value="ECO:0000303"/>
    <property type="project" value="UniProtKB"/>
</dbReference>
<dbReference type="GO" id="GO:0004468">
    <property type="term" value="F:L-lysine N-acetyltransferase activity, acting on acetyl phosphate as donor"/>
    <property type="evidence" value="ECO:0000266"/>
    <property type="project" value="RGD"/>
</dbReference>
<dbReference type="GO" id="GO:0008080">
    <property type="term" value="F:N-acetyltransferase activity"/>
    <property type="evidence" value="ECO:0000318"/>
    <property type="project" value="GO_Central"/>
</dbReference>
<dbReference type="GO" id="GO:0050435">
    <property type="term" value="P:amyloid-beta metabolic process"/>
    <property type="evidence" value="ECO:0000266"/>
    <property type="project" value="RGD"/>
</dbReference>
<dbReference type="GO" id="GO:0001702">
    <property type="term" value="P:gastrulation with mouth forming second"/>
    <property type="evidence" value="ECO:0000303"/>
    <property type="project" value="UniProtKB"/>
</dbReference>
<dbReference type="GO" id="GO:0043066">
    <property type="term" value="P:negative regulation of apoptotic process"/>
    <property type="evidence" value="ECO:0000266"/>
    <property type="project" value="RGD"/>
</dbReference>
<dbReference type="GO" id="GO:0010628">
    <property type="term" value="P:positive regulation of gene expression"/>
    <property type="evidence" value="ECO:0000266"/>
    <property type="project" value="RGD"/>
</dbReference>
<dbReference type="GO" id="GO:0016241">
    <property type="term" value="P:regulation of macroautophagy"/>
    <property type="evidence" value="ECO:0000250"/>
    <property type="project" value="UniProtKB"/>
</dbReference>
<dbReference type="GO" id="GO:0140500">
    <property type="term" value="P:regulation of reticulophagy"/>
    <property type="evidence" value="ECO:0000250"/>
    <property type="project" value="UniProtKB"/>
</dbReference>
<dbReference type="CDD" id="cd04301">
    <property type="entry name" value="NAT_SF"/>
    <property type="match status" value="1"/>
</dbReference>
<dbReference type="FunFam" id="3.40.630.30:FF:000118">
    <property type="entry name" value="N-acetyltransferase family 8 member 3"/>
    <property type="match status" value="1"/>
</dbReference>
<dbReference type="Gene3D" id="3.40.630.30">
    <property type="match status" value="1"/>
</dbReference>
<dbReference type="InterPro" id="IPR016181">
    <property type="entry name" value="Acyl_CoA_acyltransferase"/>
</dbReference>
<dbReference type="InterPro" id="IPR000182">
    <property type="entry name" value="GNAT_dom"/>
</dbReference>
<dbReference type="InterPro" id="IPR050769">
    <property type="entry name" value="NAT_camello-type"/>
</dbReference>
<dbReference type="PANTHER" id="PTHR13947">
    <property type="entry name" value="GNAT FAMILY N-ACETYLTRANSFERASE"/>
    <property type="match status" value="1"/>
</dbReference>
<dbReference type="PANTHER" id="PTHR13947:SF53">
    <property type="entry name" value="N-ACETYLTRANSFERASE 8B-RELATED"/>
    <property type="match status" value="1"/>
</dbReference>
<dbReference type="Pfam" id="PF00583">
    <property type="entry name" value="Acetyltransf_1"/>
    <property type="match status" value="1"/>
</dbReference>
<dbReference type="SUPFAM" id="SSF55729">
    <property type="entry name" value="Acyl-CoA N-acyltransferases (Nat)"/>
    <property type="match status" value="1"/>
</dbReference>
<dbReference type="PROSITE" id="PS51186">
    <property type="entry name" value="GNAT"/>
    <property type="match status" value="1"/>
</dbReference>
<feature type="chain" id="PRO_0000284696" description="N-acetyltransferase 8B">
    <location>
        <begin position="1"/>
        <end position="222"/>
    </location>
</feature>
<feature type="topological domain" description="Cytoplasmic" evidence="3">
    <location>
        <begin position="1"/>
        <end position="42"/>
    </location>
</feature>
<feature type="transmembrane region" description="Helical; Signal-anchor for type II membrane protein" evidence="3">
    <location>
        <begin position="43"/>
        <end position="67"/>
    </location>
</feature>
<feature type="topological domain" description="Lumenal" evidence="3">
    <location>
        <begin position="68"/>
        <end position="222"/>
    </location>
</feature>
<feature type="domain" description="N-acetyltransferase" evidence="4">
    <location>
        <begin position="62"/>
        <end position="217"/>
    </location>
</feature>
<feature type="modified residue" description="N6-acetyllysine" evidence="2">
    <location>
        <position position="99"/>
    </location>
</feature>
<gene>
    <name evidence="8" type="primary">Nat8b</name>
    <name evidence="8" type="synonym">Cml1</name>
    <name type="synonym">Cml6</name>
</gene>
<protein>
    <recommendedName>
        <fullName>N-acetyltransferase 8B</fullName>
        <ecNumber evidence="2">2.3.1.-</ecNumber>
    </recommendedName>
    <alternativeName>
        <fullName>Camello-like protein 1</fullName>
    </alternativeName>
    <alternativeName>
        <fullName>Camello-like protein 6</fullName>
    </alternativeName>
    <alternativeName>
        <fullName>Protein-lysine N6-acetyltransferase 8B</fullName>
    </alternativeName>
</protein>
<reference evidence="6" key="1">
    <citation type="journal article" date="2001" name="Dev. Biol.">
        <title>Overexpression of camello, a member of a novel protein family, reduces blastomere adhesion and inhibits gastrulation in Xenopus laevis.</title>
        <authorList>
            <person name="Popsueva A.E."/>
            <person name="Luchinskaya N.N."/>
            <person name="Ludwig A.V."/>
            <person name="Zinovjeva O.Y."/>
            <person name="Poteryaev D.A."/>
            <person name="Feigelman M.M."/>
            <person name="Ponomarev M.B."/>
            <person name="Berekelya L."/>
            <person name="Belyavsky A.V."/>
        </authorList>
    </citation>
    <scope>NUCLEOTIDE SEQUENCE [MRNA]</scope>
</reference>
<reference evidence="7" key="2">
    <citation type="journal article" date="2004" name="Genome Res.">
        <title>The status, quality, and expansion of the NIH full-length cDNA project: the Mammalian Gene Collection (MGC).</title>
        <authorList>
            <consortium name="The MGC Project Team"/>
        </authorList>
    </citation>
    <scope>NUCLEOTIDE SEQUENCE [LARGE SCALE MRNA]</scope>
    <source>
        <tissue evidence="7">Kidney</tissue>
    </source>
</reference>